<organism>
    <name type="scientific">Kluyveromyces lactis (strain ATCC 8585 / CBS 2359 / DSM 70799 / NBRC 1267 / NRRL Y-1140 / WM37)</name>
    <name type="common">Yeast</name>
    <name type="synonym">Candida sphaerica</name>
    <dbReference type="NCBI Taxonomy" id="284590"/>
    <lineage>
        <taxon>Eukaryota</taxon>
        <taxon>Fungi</taxon>
        <taxon>Dikarya</taxon>
        <taxon>Ascomycota</taxon>
        <taxon>Saccharomycotina</taxon>
        <taxon>Saccharomycetes</taxon>
        <taxon>Saccharomycetales</taxon>
        <taxon>Saccharomycetaceae</taxon>
        <taxon>Kluyveromyces</taxon>
    </lineage>
</organism>
<name>FKBP2_KLULA</name>
<comment type="function">
    <text evidence="1">PPIases accelerate the folding of proteins. It catalyzes the cis-trans isomerization of proline imidic peptide bonds in oligopeptides (By similarity).</text>
</comment>
<comment type="catalytic activity">
    <reaction>
        <text>[protein]-peptidylproline (omega=180) = [protein]-peptidylproline (omega=0)</text>
        <dbReference type="Rhea" id="RHEA:16237"/>
        <dbReference type="Rhea" id="RHEA-COMP:10747"/>
        <dbReference type="Rhea" id="RHEA-COMP:10748"/>
        <dbReference type="ChEBI" id="CHEBI:83833"/>
        <dbReference type="ChEBI" id="CHEBI:83834"/>
        <dbReference type="EC" id="5.2.1.8"/>
    </reaction>
</comment>
<comment type="activity regulation">
    <text evidence="1">Inhibited by both FK506 and rapamycin.</text>
</comment>
<comment type="subcellular location">
    <subcellularLocation>
        <location evidence="1">Endoplasmic reticulum</location>
    </subcellularLocation>
</comment>
<comment type="similarity">
    <text evidence="4">Belongs to the FKBP-type PPIase family. FKBP2 subfamily.</text>
</comment>
<evidence type="ECO:0000250" key="1"/>
<evidence type="ECO:0000255" key="2"/>
<evidence type="ECO:0000255" key="3">
    <source>
        <dbReference type="PROSITE-ProRule" id="PRU00277"/>
    </source>
</evidence>
<evidence type="ECO:0000305" key="4"/>
<proteinExistence type="inferred from homology"/>
<dbReference type="EC" id="5.2.1.8"/>
<dbReference type="EMBL" id="CR382123">
    <property type="protein sequence ID" value="CAH01092.1"/>
    <property type="molecule type" value="Genomic_DNA"/>
</dbReference>
<dbReference type="RefSeq" id="XP_452241.1">
    <property type="nucleotide sequence ID" value="XM_452241.1"/>
</dbReference>
<dbReference type="SMR" id="Q6CUZ8"/>
<dbReference type="FunCoup" id="Q6CUZ8">
    <property type="interactions" value="594"/>
</dbReference>
<dbReference type="STRING" id="284590.Q6CUZ8"/>
<dbReference type="PaxDb" id="284590-Q6CUZ8"/>
<dbReference type="KEGG" id="kla:KLLA0_C01045g"/>
<dbReference type="eggNOG" id="KOG0549">
    <property type="taxonomic scope" value="Eukaryota"/>
</dbReference>
<dbReference type="HOGENOM" id="CLU_013615_8_2_1"/>
<dbReference type="InParanoid" id="Q6CUZ8"/>
<dbReference type="OMA" id="PKTCDIQ"/>
<dbReference type="Proteomes" id="UP000000598">
    <property type="component" value="Chromosome C"/>
</dbReference>
<dbReference type="GO" id="GO:0005783">
    <property type="term" value="C:endoplasmic reticulum"/>
    <property type="evidence" value="ECO:0007669"/>
    <property type="project" value="UniProtKB-SubCell"/>
</dbReference>
<dbReference type="GO" id="GO:0003755">
    <property type="term" value="F:peptidyl-prolyl cis-trans isomerase activity"/>
    <property type="evidence" value="ECO:0007669"/>
    <property type="project" value="UniProtKB-KW"/>
</dbReference>
<dbReference type="GO" id="GO:0061077">
    <property type="term" value="P:chaperone-mediated protein folding"/>
    <property type="evidence" value="ECO:0007669"/>
    <property type="project" value="InterPro"/>
</dbReference>
<dbReference type="FunFam" id="3.10.50.40:FF:000006">
    <property type="entry name" value="Peptidyl-prolyl cis-trans isomerase"/>
    <property type="match status" value="1"/>
</dbReference>
<dbReference type="Gene3D" id="3.10.50.40">
    <property type="match status" value="1"/>
</dbReference>
<dbReference type="InterPro" id="IPR044609">
    <property type="entry name" value="FKBP2/11"/>
</dbReference>
<dbReference type="InterPro" id="IPR046357">
    <property type="entry name" value="PPIase_dom_sf"/>
</dbReference>
<dbReference type="InterPro" id="IPR001179">
    <property type="entry name" value="PPIase_FKBP_dom"/>
</dbReference>
<dbReference type="PANTHER" id="PTHR45779">
    <property type="entry name" value="PEPTIDYLPROLYL ISOMERASE"/>
    <property type="match status" value="1"/>
</dbReference>
<dbReference type="PANTHER" id="PTHR45779:SF7">
    <property type="entry name" value="PEPTIDYLPROLYL ISOMERASE"/>
    <property type="match status" value="1"/>
</dbReference>
<dbReference type="Pfam" id="PF00254">
    <property type="entry name" value="FKBP_C"/>
    <property type="match status" value="1"/>
</dbReference>
<dbReference type="SUPFAM" id="SSF54534">
    <property type="entry name" value="FKBP-like"/>
    <property type="match status" value="1"/>
</dbReference>
<dbReference type="PROSITE" id="PS50059">
    <property type="entry name" value="FKBP_PPIASE"/>
    <property type="match status" value="1"/>
</dbReference>
<keyword id="KW-0256">Endoplasmic reticulum</keyword>
<keyword id="KW-0413">Isomerase</keyword>
<keyword id="KW-1185">Reference proteome</keyword>
<keyword id="KW-0697">Rotamase</keyword>
<keyword id="KW-0732">Signal</keyword>
<reference key="1">
    <citation type="journal article" date="2004" name="Nature">
        <title>Genome evolution in yeasts.</title>
        <authorList>
            <person name="Dujon B."/>
            <person name="Sherman D."/>
            <person name="Fischer G."/>
            <person name="Durrens P."/>
            <person name="Casaregola S."/>
            <person name="Lafontaine I."/>
            <person name="de Montigny J."/>
            <person name="Marck C."/>
            <person name="Neuveglise C."/>
            <person name="Talla E."/>
            <person name="Goffard N."/>
            <person name="Frangeul L."/>
            <person name="Aigle M."/>
            <person name="Anthouard V."/>
            <person name="Babour A."/>
            <person name="Barbe V."/>
            <person name="Barnay S."/>
            <person name="Blanchin S."/>
            <person name="Beckerich J.-M."/>
            <person name="Beyne E."/>
            <person name="Bleykasten C."/>
            <person name="Boisrame A."/>
            <person name="Boyer J."/>
            <person name="Cattolico L."/>
            <person name="Confanioleri F."/>
            <person name="de Daruvar A."/>
            <person name="Despons L."/>
            <person name="Fabre E."/>
            <person name="Fairhead C."/>
            <person name="Ferry-Dumazet H."/>
            <person name="Groppi A."/>
            <person name="Hantraye F."/>
            <person name="Hennequin C."/>
            <person name="Jauniaux N."/>
            <person name="Joyet P."/>
            <person name="Kachouri R."/>
            <person name="Kerrest A."/>
            <person name="Koszul R."/>
            <person name="Lemaire M."/>
            <person name="Lesur I."/>
            <person name="Ma L."/>
            <person name="Muller H."/>
            <person name="Nicaud J.-M."/>
            <person name="Nikolski M."/>
            <person name="Oztas S."/>
            <person name="Ozier-Kalogeropoulos O."/>
            <person name="Pellenz S."/>
            <person name="Potier S."/>
            <person name="Richard G.-F."/>
            <person name="Straub M.-L."/>
            <person name="Suleau A."/>
            <person name="Swennen D."/>
            <person name="Tekaia F."/>
            <person name="Wesolowski-Louvel M."/>
            <person name="Westhof E."/>
            <person name="Wirth B."/>
            <person name="Zeniou-Meyer M."/>
            <person name="Zivanovic Y."/>
            <person name="Bolotin-Fukuhara M."/>
            <person name="Thierry A."/>
            <person name="Bouchier C."/>
            <person name="Caudron B."/>
            <person name="Scarpelli C."/>
            <person name="Gaillardin C."/>
            <person name="Weissenbach J."/>
            <person name="Wincker P."/>
            <person name="Souciet J.-L."/>
        </authorList>
    </citation>
    <scope>NUCLEOTIDE SEQUENCE [LARGE SCALE GENOMIC DNA]</scope>
    <source>
        <strain>ATCC 8585 / CBS 2359 / DSM 70799 / NBRC 1267 / NRRL Y-1140 / WM37</strain>
    </source>
</reference>
<accession>Q6CUZ8</accession>
<feature type="signal peptide" evidence="2">
    <location>
        <begin position="1"/>
        <end position="19"/>
    </location>
</feature>
<feature type="chain" id="PRO_0000233070" description="FK506-binding protein 2">
    <location>
        <begin position="20"/>
        <end position="140"/>
    </location>
</feature>
<feature type="domain" description="PPIase FKBP-type" evidence="3">
    <location>
        <begin position="43"/>
        <end position="132"/>
    </location>
</feature>
<protein>
    <recommendedName>
        <fullName>FK506-binding protein 2</fullName>
        <ecNumber>5.2.1.8</ecNumber>
    </recommendedName>
    <alternativeName>
        <fullName>Peptidyl-prolyl cis-trans isomerase</fullName>
        <shortName>PPIase</shortName>
    </alternativeName>
    <alternativeName>
        <fullName>Rotamase</fullName>
    </alternativeName>
</protein>
<sequence length="140" mass="15255">MKFTTGLSVLLFFVLQVFAEKLTELVVGVTKEPVDCKIKASKGDVVSVHYTGKLRDSGEIFDSSYNRGVPIQFKLGYSQVISGWDQGILGMCIGEGRTLHIPSELGYGSRGAGSVIPPDADLIFETELVDIQREAVDDEL</sequence>
<gene>
    <name type="primary">FPR2</name>
    <name type="ordered locus">KLLA0C01045g</name>
</gene>